<evidence type="ECO:0000250" key="1"/>
<evidence type="ECO:0000250" key="2">
    <source>
        <dbReference type="UniProtKB" id="P25942"/>
    </source>
</evidence>
<evidence type="ECO:0000255" key="3"/>
<evidence type="ECO:0000255" key="4">
    <source>
        <dbReference type="PROSITE-ProRule" id="PRU00206"/>
    </source>
</evidence>
<evidence type="ECO:0000256" key="5">
    <source>
        <dbReference type="SAM" id="MobiDB-lite"/>
    </source>
</evidence>
<evidence type="ECO:0000269" key="6">
    <source>
    </source>
</evidence>
<evidence type="ECO:0000269" key="7">
    <source>
    </source>
</evidence>
<evidence type="ECO:0000269" key="8">
    <source>
    </source>
</evidence>
<evidence type="ECO:0000305" key="9"/>
<organism>
    <name type="scientific">Mus musculus</name>
    <name type="common">Mouse</name>
    <dbReference type="NCBI Taxonomy" id="10090"/>
    <lineage>
        <taxon>Eukaryota</taxon>
        <taxon>Metazoa</taxon>
        <taxon>Chordata</taxon>
        <taxon>Craniata</taxon>
        <taxon>Vertebrata</taxon>
        <taxon>Euteleostomi</taxon>
        <taxon>Mammalia</taxon>
        <taxon>Eutheria</taxon>
        <taxon>Euarchontoglires</taxon>
        <taxon>Glires</taxon>
        <taxon>Rodentia</taxon>
        <taxon>Myomorpha</taxon>
        <taxon>Muroidea</taxon>
        <taxon>Muridae</taxon>
        <taxon>Murinae</taxon>
        <taxon>Mus</taxon>
        <taxon>Mus</taxon>
    </lineage>
</organism>
<reference key="1">
    <citation type="journal article" date="1992" name="J. Immunol.">
        <title>Differential increase of an alternatively polyadenylated mRNA species of murine CD40 upon B lymphocyte activation.</title>
        <authorList>
            <person name="Torres R.M."/>
            <person name="Clark E.A."/>
        </authorList>
    </citation>
    <scope>NUCLEOTIDE SEQUENCE [MRNA] (ISOFORM I)</scope>
    <source>
        <strain>BALB/cJ</strain>
    </source>
</reference>
<reference key="2">
    <citation type="submission" date="1996-09" db="EMBL/GenBank/DDBJ databases">
        <authorList>
            <person name="Torres R.M."/>
        </authorList>
    </citation>
    <scope>SEQUENCE REVISION</scope>
</reference>
<reference key="3">
    <citation type="journal article" date="1992" name="J. Immunol.">
        <title>Genomic structure and chromosomal mapping of the murine CD40 gene.</title>
        <authorList>
            <person name="Grimaldi J.C."/>
            <person name="Torres R."/>
            <person name="Kozak C.A."/>
            <person name="Chang R."/>
            <person name="Clark E.A."/>
            <person name="Howard M."/>
            <person name="Cockayne D.A."/>
        </authorList>
    </citation>
    <scope>NUCLEOTIDE SEQUENCE [GENOMIC DNA] (ISOFORM I)</scope>
    <source>
        <strain>BALB/cJ</strain>
        <tissue>Liver</tissue>
    </source>
</reference>
<reference key="4">
    <citation type="journal article" date="2001" name="Proc. Natl. Acad. Sci. U.S.A.">
        <title>Regulation of CD40 function by its isoforms generated through alternative splicing.</title>
        <authorList>
            <person name="Tone M."/>
            <person name="Tone Y."/>
            <person name="Fairchild P.J."/>
            <person name="Wykes M."/>
            <person name="Waldmann H."/>
        </authorList>
    </citation>
    <scope>NUCLEOTIDE SEQUENCE [MRNA]</scope>
    <scope>ALTERNATIVE SPLICING (ISOFORMS II; III; IV AND V)</scope>
</reference>
<reference key="5">
    <citation type="journal article" date="2005" name="Science">
        <title>The transcriptional landscape of the mammalian genome.</title>
        <authorList>
            <person name="Carninci P."/>
            <person name="Kasukawa T."/>
            <person name="Katayama S."/>
            <person name="Gough J."/>
            <person name="Frith M.C."/>
            <person name="Maeda N."/>
            <person name="Oyama R."/>
            <person name="Ravasi T."/>
            <person name="Lenhard B."/>
            <person name="Wells C."/>
            <person name="Kodzius R."/>
            <person name="Shimokawa K."/>
            <person name="Bajic V.B."/>
            <person name="Brenner S.E."/>
            <person name="Batalov S."/>
            <person name="Forrest A.R."/>
            <person name="Zavolan M."/>
            <person name="Davis M.J."/>
            <person name="Wilming L.G."/>
            <person name="Aidinis V."/>
            <person name="Allen J.E."/>
            <person name="Ambesi-Impiombato A."/>
            <person name="Apweiler R."/>
            <person name="Aturaliya R.N."/>
            <person name="Bailey T.L."/>
            <person name="Bansal M."/>
            <person name="Baxter L."/>
            <person name="Beisel K.W."/>
            <person name="Bersano T."/>
            <person name="Bono H."/>
            <person name="Chalk A.M."/>
            <person name="Chiu K.P."/>
            <person name="Choudhary V."/>
            <person name="Christoffels A."/>
            <person name="Clutterbuck D.R."/>
            <person name="Crowe M.L."/>
            <person name="Dalla E."/>
            <person name="Dalrymple B.P."/>
            <person name="de Bono B."/>
            <person name="Della Gatta G."/>
            <person name="di Bernardo D."/>
            <person name="Down T."/>
            <person name="Engstrom P."/>
            <person name="Fagiolini M."/>
            <person name="Faulkner G."/>
            <person name="Fletcher C.F."/>
            <person name="Fukushima T."/>
            <person name="Furuno M."/>
            <person name="Futaki S."/>
            <person name="Gariboldi M."/>
            <person name="Georgii-Hemming P."/>
            <person name="Gingeras T.R."/>
            <person name="Gojobori T."/>
            <person name="Green R.E."/>
            <person name="Gustincich S."/>
            <person name="Harbers M."/>
            <person name="Hayashi Y."/>
            <person name="Hensch T.K."/>
            <person name="Hirokawa N."/>
            <person name="Hill D."/>
            <person name="Huminiecki L."/>
            <person name="Iacono M."/>
            <person name="Ikeo K."/>
            <person name="Iwama A."/>
            <person name="Ishikawa T."/>
            <person name="Jakt M."/>
            <person name="Kanapin A."/>
            <person name="Katoh M."/>
            <person name="Kawasawa Y."/>
            <person name="Kelso J."/>
            <person name="Kitamura H."/>
            <person name="Kitano H."/>
            <person name="Kollias G."/>
            <person name="Krishnan S.P."/>
            <person name="Kruger A."/>
            <person name="Kummerfeld S.K."/>
            <person name="Kurochkin I.V."/>
            <person name="Lareau L.F."/>
            <person name="Lazarevic D."/>
            <person name="Lipovich L."/>
            <person name="Liu J."/>
            <person name="Liuni S."/>
            <person name="McWilliam S."/>
            <person name="Madan Babu M."/>
            <person name="Madera M."/>
            <person name="Marchionni L."/>
            <person name="Matsuda H."/>
            <person name="Matsuzawa S."/>
            <person name="Miki H."/>
            <person name="Mignone F."/>
            <person name="Miyake S."/>
            <person name="Morris K."/>
            <person name="Mottagui-Tabar S."/>
            <person name="Mulder N."/>
            <person name="Nakano N."/>
            <person name="Nakauchi H."/>
            <person name="Ng P."/>
            <person name="Nilsson R."/>
            <person name="Nishiguchi S."/>
            <person name="Nishikawa S."/>
            <person name="Nori F."/>
            <person name="Ohara O."/>
            <person name="Okazaki Y."/>
            <person name="Orlando V."/>
            <person name="Pang K.C."/>
            <person name="Pavan W.J."/>
            <person name="Pavesi G."/>
            <person name="Pesole G."/>
            <person name="Petrovsky N."/>
            <person name="Piazza S."/>
            <person name="Reed J."/>
            <person name="Reid J.F."/>
            <person name="Ring B.Z."/>
            <person name="Ringwald M."/>
            <person name="Rost B."/>
            <person name="Ruan Y."/>
            <person name="Salzberg S.L."/>
            <person name="Sandelin A."/>
            <person name="Schneider C."/>
            <person name="Schoenbach C."/>
            <person name="Sekiguchi K."/>
            <person name="Semple C.A."/>
            <person name="Seno S."/>
            <person name="Sessa L."/>
            <person name="Sheng Y."/>
            <person name="Shibata Y."/>
            <person name="Shimada H."/>
            <person name="Shimada K."/>
            <person name="Silva D."/>
            <person name="Sinclair B."/>
            <person name="Sperling S."/>
            <person name="Stupka E."/>
            <person name="Sugiura K."/>
            <person name="Sultana R."/>
            <person name="Takenaka Y."/>
            <person name="Taki K."/>
            <person name="Tammoja K."/>
            <person name="Tan S.L."/>
            <person name="Tang S."/>
            <person name="Taylor M.S."/>
            <person name="Tegner J."/>
            <person name="Teichmann S.A."/>
            <person name="Ueda H.R."/>
            <person name="van Nimwegen E."/>
            <person name="Verardo R."/>
            <person name="Wei C.L."/>
            <person name="Yagi K."/>
            <person name="Yamanishi H."/>
            <person name="Zabarovsky E."/>
            <person name="Zhu S."/>
            <person name="Zimmer A."/>
            <person name="Hide W."/>
            <person name="Bult C."/>
            <person name="Grimmond S.M."/>
            <person name="Teasdale R.D."/>
            <person name="Liu E.T."/>
            <person name="Brusic V."/>
            <person name="Quackenbush J."/>
            <person name="Wahlestedt C."/>
            <person name="Mattick J.S."/>
            <person name="Hume D.A."/>
            <person name="Kai C."/>
            <person name="Sasaki D."/>
            <person name="Tomaru Y."/>
            <person name="Fukuda S."/>
            <person name="Kanamori-Katayama M."/>
            <person name="Suzuki M."/>
            <person name="Aoki J."/>
            <person name="Arakawa T."/>
            <person name="Iida J."/>
            <person name="Imamura K."/>
            <person name="Itoh M."/>
            <person name="Kato T."/>
            <person name="Kawaji H."/>
            <person name="Kawagashira N."/>
            <person name="Kawashima T."/>
            <person name="Kojima M."/>
            <person name="Kondo S."/>
            <person name="Konno H."/>
            <person name="Nakano K."/>
            <person name="Ninomiya N."/>
            <person name="Nishio T."/>
            <person name="Okada M."/>
            <person name="Plessy C."/>
            <person name="Shibata K."/>
            <person name="Shiraki T."/>
            <person name="Suzuki S."/>
            <person name="Tagami M."/>
            <person name="Waki K."/>
            <person name="Watahiki A."/>
            <person name="Okamura-Oho Y."/>
            <person name="Suzuki H."/>
            <person name="Kawai J."/>
            <person name="Hayashizaki Y."/>
        </authorList>
    </citation>
    <scope>NUCLEOTIDE SEQUENCE [LARGE SCALE MRNA] (ISOFORM I)</scope>
    <source>
        <strain>C57BL/6J</strain>
        <strain>NOD</strain>
        <tissue>Bone marrow macrophage</tissue>
        <tissue>Cerebellum</tissue>
        <tissue>Colon</tissue>
        <tissue>Spleen</tissue>
    </source>
</reference>
<reference key="6">
    <citation type="submission" date="2005-07" db="EMBL/GenBank/DDBJ databases">
        <title>Cloning of mouse full open reading frames in Gateway(R) system entry vector (pDONR201).</title>
        <authorList>
            <person name="Ebert L."/>
            <person name="Muenstermann E."/>
            <person name="Schatten R."/>
            <person name="Henze S."/>
            <person name="Bohn E."/>
            <person name="Mollenhauer J."/>
            <person name="Wiemann S."/>
            <person name="Schick M."/>
            <person name="Korn B."/>
        </authorList>
    </citation>
    <scope>NUCLEOTIDE SEQUENCE [LARGE SCALE MRNA] (ISOFORM I)</scope>
</reference>
<reference key="7">
    <citation type="journal article" date="2009" name="PLoS Biol.">
        <title>Lineage-specific biology revealed by a finished genome assembly of the mouse.</title>
        <authorList>
            <person name="Church D.M."/>
            <person name="Goodstadt L."/>
            <person name="Hillier L.W."/>
            <person name="Zody M.C."/>
            <person name="Goldstein S."/>
            <person name="She X."/>
            <person name="Bult C.J."/>
            <person name="Agarwala R."/>
            <person name="Cherry J.L."/>
            <person name="DiCuccio M."/>
            <person name="Hlavina W."/>
            <person name="Kapustin Y."/>
            <person name="Meric P."/>
            <person name="Maglott D."/>
            <person name="Birtle Z."/>
            <person name="Marques A.C."/>
            <person name="Graves T."/>
            <person name="Zhou S."/>
            <person name="Teague B."/>
            <person name="Potamousis K."/>
            <person name="Churas C."/>
            <person name="Place M."/>
            <person name="Herschleb J."/>
            <person name="Runnheim R."/>
            <person name="Forrest D."/>
            <person name="Amos-Landgraf J."/>
            <person name="Schwartz D.C."/>
            <person name="Cheng Z."/>
            <person name="Lindblad-Toh K."/>
            <person name="Eichler E.E."/>
            <person name="Ponting C.P."/>
        </authorList>
    </citation>
    <scope>NUCLEOTIDE SEQUENCE [LARGE SCALE GENOMIC DNA]</scope>
    <source>
        <strain>C57BL/6J</strain>
    </source>
</reference>
<reference key="8">
    <citation type="journal article" date="2004" name="Genome Res.">
        <title>The status, quality, and expansion of the NIH full-length cDNA project: the Mammalian Gene Collection (MGC).</title>
        <authorList>
            <consortium name="The MGC Project Team"/>
        </authorList>
    </citation>
    <scope>NUCLEOTIDE SEQUENCE [LARGE SCALE MRNA] (ISOFORM I)</scope>
    <source>
        <strain>Czech II</strain>
        <tissue>Mammary tumor</tissue>
    </source>
</reference>
<reference key="9">
    <citation type="journal article" date="1995" name="Science">
        <title>Involvement of CRAF1, a relative of TRAF, in CD40 signaling.</title>
        <authorList>
            <person name="Cheng G."/>
            <person name="Cleary A.M."/>
            <person name="Ye Z.S."/>
            <person name="Hong D.I."/>
            <person name="Lederman S."/>
            <person name="Baltimore D."/>
        </authorList>
    </citation>
    <scope>INTERACTION WITH TRAF3</scope>
</reference>
<reference key="10">
    <citation type="journal article" date="1996" name="Proc. Natl. Acad. Sci. U.S.A.">
        <title>TRAF5, a novel tumor necrosis factor receptor-associated factor family protein, mediates CD40 signaling.</title>
        <authorList>
            <person name="Ishida T."/>
            <person name="Tojo T."/>
            <person name="Aoki T."/>
            <person name="Kobayashi N."/>
            <person name="Ohishi T."/>
            <person name="Watanabe T."/>
            <person name="Yamamoto T."/>
            <person name="Inoue J."/>
        </authorList>
    </citation>
    <scope>INTERACTION WITH TRAF5</scope>
</reference>
<reference key="11">
    <citation type="journal article" date="2003" name="EMBO J.">
        <title>Tpl2 transduces CD40 and TNF signals that activate ERK and regulates IgE induction by CD40.</title>
        <authorList>
            <person name="Eliopoulos A.G."/>
            <person name="Wang C.C."/>
            <person name="Dumitru C.D."/>
            <person name="Tsichlis P.N."/>
        </authorList>
    </citation>
    <scope>FUNCTION</scope>
    <scope>INTERACTION WITH MAP3K8 AND TRAF6</scope>
</reference>
<reference key="12">
    <citation type="journal article" date="2010" name="Cell">
        <title>A tissue-specific atlas of mouse protein phosphorylation and expression.</title>
        <authorList>
            <person name="Huttlin E.L."/>
            <person name="Jedrychowski M.P."/>
            <person name="Elias J.E."/>
            <person name="Goswami T."/>
            <person name="Rad R."/>
            <person name="Beausoleil S.A."/>
            <person name="Villen J."/>
            <person name="Haas W."/>
            <person name="Sowa M.E."/>
            <person name="Gygi S.P."/>
        </authorList>
    </citation>
    <scope>IDENTIFICATION BY MASS SPECTROMETRY [LARGE SCALE ANALYSIS]</scope>
    <source>
        <tissue>Spleen</tissue>
    </source>
</reference>
<feature type="signal peptide" evidence="3">
    <location>
        <begin position="1"/>
        <end position="19"/>
    </location>
</feature>
<feature type="chain" id="PRO_0000034560" description="Tumor necrosis factor receptor superfamily member 5">
    <location>
        <begin position="20"/>
        <end position="289"/>
    </location>
</feature>
<feature type="topological domain" description="Extracellular" evidence="3">
    <location>
        <begin position="20"/>
        <end position="193"/>
    </location>
</feature>
<feature type="transmembrane region" description="Helical" evidence="3">
    <location>
        <begin position="194"/>
        <end position="215"/>
    </location>
</feature>
<feature type="topological domain" description="Cytoplasmic" evidence="3">
    <location>
        <begin position="216"/>
        <end position="289"/>
    </location>
</feature>
<feature type="repeat" description="TNFR-Cys 1">
    <location>
        <begin position="25"/>
        <end position="60"/>
    </location>
</feature>
<feature type="repeat" description="TNFR-Cys 2">
    <location>
        <begin position="61"/>
        <end position="103"/>
    </location>
</feature>
<feature type="repeat" description="TNFR-Cys 3">
    <location>
        <begin position="104"/>
        <end position="144"/>
    </location>
</feature>
<feature type="repeat" description="TNFR-Cys 4">
    <location>
        <begin position="145"/>
        <end position="187"/>
    </location>
</feature>
<feature type="region of interest" description="Disordered" evidence="5">
    <location>
        <begin position="228"/>
        <end position="251"/>
    </location>
</feature>
<feature type="glycosylation site" description="N-linked (GlcNAc...) asparagine" evidence="3">
    <location>
        <position position="153"/>
    </location>
</feature>
<feature type="disulfide bond" evidence="4">
    <location>
        <begin position="26"/>
        <end position="37"/>
    </location>
</feature>
<feature type="disulfide bond" evidence="4">
    <location>
        <begin position="38"/>
        <end position="51"/>
    </location>
</feature>
<feature type="disulfide bond" evidence="4">
    <location>
        <begin position="41"/>
        <end position="59"/>
    </location>
</feature>
<feature type="disulfide bond" evidence="4">
    <location>
        <begin position="62"/>
        <end position="77"/>
    </location>
</feature>
<feature type="disulfide bond" evidence="4">
    <location>
        <begin position="83"/>
        <end position="103"/>
    </location>
</feature>
<feature type="disulfide bond" evidence="4">
    <location>
        <begin position="105"/>
        <end position="119"/>
    </location>
</feature>
<feature type="disulfide bond" evidence="4">
    <location>
        <begin position="111"/>
        <end position="116"/>
    </location>
</feature>
<feature type="disulfide bond" evidence="4">
    <location>
        <begin position="125"/>
        <end position="143"/>
    </location>
</feature>
<feature type="splice variant" id="VSP_006474" description="In isoform II." evidence="9">
    <original>SCEDKNLEVLQKGTSQTNVICGLKSRMRALLVIPVVMG</original>
    <variation>RFKVPDASPAGHSCRDGHPHHHFRGVSLYQKGGQETKG</variation>
    <location>
        <begin position="166"/>
        <end position="203"/>
    </location>
</feature>
<feature type="splice variant" id="VSP_006476" description="In isoform V." evidence="9">
    <original>GLKSRMRALLVIPVVMGILITIFGVFLYIK</original>
    <variation>E</variation>
    <location>
        <begin position="187"/>
        <end position="216"/>
    </location>
</feature>
<feature type="splice variant" id="VSP_006475" description="In isoform II." evidence="9">
    <location>
        <begin position="204"/>
        <end position="289"/>
    </location>
</feature>
<feature type="splice variant" id="VSP_006477" description="In isoform III." evidence="9">
    <original>KKVVKKPKDNEILPPAARR</original>
    <variation>SECSGEEREGGFSPVEPAS</variation>
    <location>
        <begin position="216"/>
        <end position="234"/>
    </location>
</feature>
<feature type="splice variant" id="VSP_006479" description="In isoform IV." evidence="9">
    <original>KKVVKKP</original>
    <variation>SGQETKG</variation>
    <location>
        <begin position="216"/>
        <end position="222"/>
    </location>
</feature>
<feature type="splice variant" id="VSP_006480" description="In isoform IV." evidence="9">
    <location>
        <begin position="223"/>
        <end position="289"/>
    </location>
</feature>
<feature type="splice variant" id="VSP_006478" description="In isoform III." evidence="9">
    <location>
        <begin position="235"/>
        <end position="289"/>
    </location>
</feature>
<feature type="sequence conflict" description="In Ref. 5; BAE31440." evidence="9" ref="5">
    <original>G</original>
    <variation>W</variation>
    <location>
        <position position="21"/>
    </location>
</feature>
<feature type="sequence conflict" description="In Ref. 6; CAJ18551 and 8; AAH29254." evidence="9" ref="6 8">
    <original>V</original>
    <variation>L</variation>
    <location>
        <position position="24"/>
    </location>
</feature>
<feature type="sequence conflict" description="In Ref. 5; BAE36843." evidence="9" ref="5">
    <original>K</original>
    <variation>N</variation>
    <location>
        <position position="92"/>
    </location>
</feature>
<feature type="sequence conflict" description="In Ref. 6; CAJ18551 and 8; AAH29254." evidence="9" ref="6 8">
    <original>T</original>
    <variation>A</variation>
    <location>
        <position position="104"/>
    </location>
</feature>
<feature type="sequence conflict" description="In Ref. 5; BAE29991." evidence="9" ref="5">
    <original>A</original>
    <variation>T</variation>
    <location>
        <position position="194"/>
    </location>
</feature>
<feature type="sequence conflict" description="In Ref. 5; BAE31471." evidence="9" ref="5">
    <original>K</original>
    <variation>E</variation>
    <location>
        <position position="221"/>
    </location>
</feature>
<feature type="sequence conflict" description="In Ref. 1; AAB08705, 3; AAA37404, 4; CAC29430 and 5; BAC40978/BAE33789." evidence="9" ref="1 3 4 5">
    <original>I</original>
    <variation>M</variation>
    <location>
        <position position="227"/>
    </location>
</feature>
<keyword id="KW-0025">Alternative splicing</keyword>
<keyword id="KW-1003">Cell membrane</keyword>
<keyword id="KW-1015">Disulfide bond</keyword>
<keyword id="KW-0325">Glycoprotein</keyword>
<keyword id="KW-0391">Immunity</keyword>
<keyword id="KW-0472">Membrane</keyword>
<keyword id="KW-0675">Receptor</keyword>
<keyword id="KW-1185">Reference proteome</keyword>
<keyword id="KW-0677">Repeat</keyword>
<keyword id="KW-0964">Secreted</keyword>
<keyword id="KW-0732">Signal</keyword>
<keyword id="KW-0812">Transmembrane</keyword>
<keyword id="KW-1133">Transmembrane helix</keyword>
<gene>
    <name type="primary">Cd40</name>
    <name type="synonym">Tnfrsf5</name>
</gene>
<proteinExistence type="evidence at protein level"/>
<dbReference type="EMBL" id="M83312">
    <property type="protein sequence ID" value="AAB08705.1"/>
    <property type="molecule type" value="mRNA"/>
</dbReference>
<dbReference type="EMBL" id="M94126">
    <property type="protein sequence ID" value="AAA37404.1"/>
    <property type="molecule type" value="Genomic_DNA"/>
</dbReference>
<dbReference type="EMBL" id="M94129">
    <property type="protein sequence ID" value="AAA37404.1"/>
    <property type="status" value="JOINED"/>
    <property type="molecule type" value="Genomic_DNA"/>
</dbReference>
<dbReference type="EMBL" id="M94128">
    <property type="protein sequence ID" value="AAA37404.1"/>
    <property type="status" value="JOINED"/>
    <property type="molecule type" value="Genomic_DNA"/>
</dbReference>
<dbReference type="EMBL" id="M94127">
    <property type="protein sequence ID" value="AAA37404.1"/>
    <property type="status" value="JOINED"/>
    <property type="molecule type" value="Genomic_DNA"/>
</dbReference>
<dbReference type="EMBL" id="AJ401387">
    <property type="protein sequence ID" value="CAC29427.1"/>
    <property type="molecule type" value="mRNA"/>
</dbReference>
<dbReference type="EMBL" id="AJ401388">
    <property type="protein sequence ID" value="CAC29428.1"/>
    <property type="molecule type" value="mRNA"/>
</dbReference>
<dbReference type="EMBL" id="AJ401389">
    <property type="protein sequence ID" value="CAC29429.1"/>
    <property type="molecule type" value="mRNA"/>
</dbReference>
<dbReference type="EMBL" id="AJ401390">
    <property type="protein sequence ID" value="CAC29430.1"/>
    <property type="molecule type" value="mRNA"/>
</dbReference>
<dbReference type="EMBL" id="AK089861">
    <property type="protein sequence ID" value="BAC40978.1"/>
    <property type="molecule type" value="mRNA"/>
</dbReference>
<dbReference type="EMBL" id="AK150959">
    <property type="protein sequence ID" value="BAE29991.1"/>
    <property type="molecule type" value="mRNA"/>
</dbReference>
<dbReference type="EMBL" id="AK152716">
    <property type="protein sequence ID" value="BAE31440.1"/>
    <property type="molecule type" value="mRNA"/>
</dbReference>
<dbReference type="EMBL" id="AK152756">
    <property type="protein sequence ID" value="BAE31471.1"/>
    <property type="molecule type" value="mRNA"/>
</dbReference>
<dbReference type="EMBL" id="AK152942">
    <property type="protein sequence ID" value="BAE31613.1"/>
    <property type="molecule type" value="mRNA"/>
</dbReference>
<dbReference type="EMBL" id="AK156644">
    <property type="protein sequence ID" value="BAE33789.1"/>
    <property type="molecule type" value="mRNA"/>
</dbReference>
<dbReference type="EMBL" id="AK161978">
    <property type="protein sequence ID" value="BAE36663.1"/>
    <property type="molecule type" value="mRNA"/>
</dbReference>
<dbReference type="EMBL" id="AK162305">
    <property type="protein sequence ID" value="BAE36843.1"/>
    <property type="molecule type" value="mRNA"/>
</dbReference>
<dbReference type="EMBL" id="CT010343">
    <property type="protein sequence ID" value="CAJ18551.1"/>
    <property type="molecule type" value="mRNA"/>
</dbReference>
<dbReference type="EMBL" id="AL591411">
    <property type="status" value="NOT_ANNOTATED_CDS"/>
    <property type="molecule type" value="Genomic_DNA"/>
</dbReference>
<dbReference type="EMBL" id="AL591495">
    <property type="status" value="NOT_ANNOTATED_CDS"/>
    <property type="molecule type" value="Genomic_DNA"/>
</dbReference>
<dbReference type="EMBL" id="BC029254">
    <property type="protein sequence ID" value="AAH29254.1"/>
    <property type="molecule type" value="mRNA"/>
</dbReference>
<dbReference type="CCDS" id="CCDS17069.1">
    <molecule id="P27512-1"/>
</dbReference>
<dbReference type="CCDS" id="CCDS17070.1">
    <molecule id="P27512-5"/>
</dbReference>
<dbReference type="CCDS" id="CCDS17071.1">
    <molecule id="P27512-2"/>
</dbReference>
<dbReference type="PIR" id="A46476">
    <property type="entry name" value="A46476"/>
</dbReference>
<dbReference type="RefSeq" id="NP_035741.2">
    <molecule id="P27512-1"/>
    <property type="nucleotide sequence ID" value="NM_011611.3"/>
</dbReference>
<dbReference type="RefSeq" id="NP_733803.2">
    <molecule id="P27512-5"/>
    <property type="nucleotide sequence ID" value="NM_170702.3"/>
</dbReference>
<dbReference type="RefSeq" id="NP_733804.1">
    <molecule id="P27512-2"/>
    <property type="nucleotide sequence ID" value="NM_170703.3"/>
</dbReference>
<dbReference type="RefSeq" id="NP_733805.1">
    <molecule id="P27512-4"/>
    <property type="nucleotide sequence ID" value="NM_170704.3"/>
</dbReference>
<dbReference type="SMR" id="P27512"/>
<dbReference type="BioGRID" id="204251">
    <property type="interactions" value="18"/>
</dbReference>
<dbReference type="CORUM" id="P27512"/>
<dbReference type="DIP" id="DIP-33295N"/>
<dbReference type="ELM" id="P27512"/>
<dbReference type="FunCoup" id="P27512">
    <property type="interactions" value="809"/>
</dbReference>
<dbReference type="IntAct" id="P27512">
    <property type="interactions" value="6"/>
</dbReference>
<dbReference type="MINT" id="P27512"/>
<dbReference type="STRING" id="10090.ENSMUSP00000017799"/>
<dbReference type="GlyCosmos" id="P27512">
    <property type="glycosylation" value="1 site, No reported glycans"/>
</dbReference>
<dbReference type="GlyGen" id="P27512">
    <property type="glycosylation" value="1 site"/>
</dbReference>
<dbReference type="iPTMnet" id="P27512"/>
<dbReference type="PhosphoSitePlus" id="P27512"/>
<dbReference type="SwissPalm" id="P27512"/>
<dbReference type="PaxDb" id="10090-ENSMUSP00000017799"/>
<dbReference type="PeptideAtlas" id="P27512"/>
<dbReference type="ProteomicsDB" id="258940">
    <molecule id="P27512-1"/>
</dbReference>
<dbReference type="ProteomicsDB" id="258941">
    <molecule id="P27512-2"/>
</dbReference>
<dbReference type="ProteomicsDB" id="258942">
    <molecule id="P27512-3"/>
</dbReference>
<dbReference type="ProteomicsDB" id="258943">
    <molecule id="P27512-4"/>
</dbReference>
<dbReference type="ProteomicsDB" id="258944">
    <molecule id="P27512-5"/>
</dbReference>
<dbReference type="Antibodypedia" id="3736">
    <property type="antibodies" value="3291 antibodies from 55 providers"/>
</dbReference>
<dbReference type="DNASU" id="21939"/>
<dbReference type="Ensembl" id="ENSMUST00000017799.12">
    <molecule id="P27512-1"/>
    <property type="protein sequence ID" value="ENSMUSP00000017799.6"/>
    <property type="gene ID" value="ENSMUSG00000017652.17"/>
</dbReference>
<dbReference type="Ensembl" id="ENSMUST00000073707.9">
    <molecule id="P27512-5"/>
    <property type="protein sequence ID" value="ENSMUSP00000073386.3"/>
    <property type="gene ID" value="ENSMUSG00000017652.17"/>
</dbReference>
<dbReference type="Ensembl" id="ENSMUST00000081310.11">
    <molecule id="P27512-2"/>
    <property type="protein sequence ID" value="ENSMUSP00000080059.5"/>
    <property type="gene ID" value="ENSMUSG00000017652.17"/>
</dbReference>
<dbReference type="Ensembl" id="ENSMUST00000184221.2">
    <molecule id="P27512-3"/>
    <property type="protein sequence ID" value="ENSMUSP00000139193.2"/>
    <property type="gene ID" value="ENSMUSG00000017652.17"/>
</dbReference>
<dbReference type="GeneID" id="21939"/>
<dbReference type="KEGG" id="mmu:21939"/>
<dbReference type="UCSC" id="uc008nwx.1">
    <molecule id="P27512-5"/>
    <property type="organism name" value="mouse"/>
</dbReference>
<dbReference type="UCSC" id="uc008nwy.1">
    <molecule id="P27512-1"/>
    <property type="organism name" value="mouse"/>
</dbReference>
<dbReference type="UCSC" id="uc008nwz.1">
    <molecule id="P27512-4"/>
    <property type="organism name" value="mouse"/>
</dbReference>
<dbReference type="UCSC" id="uc008nxb.1">
    <molecule id="P27512-2"/>
    <property type="organism name" value="mouse"/>
</dbReference>
<dbReference type="AGR" id="MGI:88336"/>
<dbReference type="CTD" id="958"/>
<dbReference type="MGI" id="MGI:88336">
    <property type="gene designation" value="Cd40"/>
</dbReference>
<dbReference type="VEuPathDB" id="HostDB:ENSMUSG00000017652"/>
<dbReference type="eggNOG" id="ENOG502S5TQ">
    <property type="taxonomic scope" value="Eukaryota"/>
</dbReference>
<dbReference type="GeneTree" id="ENSGT00940000161464"/>
<dbReference type="HOGENOM" id="CLU_052667_4_0_1"/>
<dbReference type="InParanoid" id="P27512"/>
<dbReference type="OMA" id="WTKERHC"/>
<dbReference type="OrthoDB" id="9932129at2759"/>
<dbReference type="PhylomeDB" id="P27512"/>
<dbReference type="TreeFam" id="TF331157"/>
<dbReference type="Reactome" id="R-MMU-198933">
    <property type="pathway name" value="Immunoregulatory interactions between a Lymphoid and a non-Lymphoid cell"/>
</dbReference>
<dbReference type="Reactome" id="R-MMU-5668541">
    <property type="pathway name" value="TNFR2 non-canonical NF-kB pathway"/>
</dbReference>
<dbReference type="Reactome" id="R-MMU-5676594">
    <property type="pathway name" value="TNF receptor superfamily (TNFSF) members mediating non-canonical NF-kB pathway"/>
</dbReference>
<dbReference type="BioGRID-ORCS" id="21939">
    <property type="hits" value="1 hit in 114 CRISPR screens"/>
</dbReference>
<dbReference type="PRO" id="PR:P27512"/>
<dbReference type="Proteomes" id="UP000000589">
    <property type="component" value="Chromosome 2"/>
</dbReference>
<dbReference type="RNAct" id="P27512">
    <property type="molecule type" value="protein"/>
</dbReference>
<dbReference type="Bgee" id="ENSMUSG00000017652">
    <property type="expression patterns" value="Expressed in peripheral lymph node and 148 other cell types or tissues"/>
</dbReference>
<dbReference type="ExpressionAtlas" id="P27512">
    <property type="expression patterns" value="baseline and differential"/>
</dbReference>
<dbReference type="GO" id="GO:0035631">
    <property type="term" value="C:CD40 receptor complex"/>
    <property type="evidence" value="ECO:0000314"/>
    <property type="project" value="BHF-UCL"/>
</dbReference>
<dbReference type="GO" id="GO:0009986">
    <property type="term" value="C:cell surface"/>
    <property type="evidence" value="ECO:0000314"/>
    <property type="project" value="MGI"/>
</dbReference>
<dbReference type="GO" id="GO:0009897">
    <property type="term" value="C:external side of plasma membrane"/>
    <property type="evidence" value="ECO:0000314"/>
    <property type="project" value="MGI"/>
</dbReference>
<dbReference type="GO" id="GO:0005576">
    <property type="term" value="C:extracellular region"/>
    <property type="evidence" value="ECO:0007669"/>
    <property type="project" value="UniProtKB-SubCell"/>
</dbReference>
<dbReference type="GO" id="GO:0043231">
    <property type="term" value="C:intracellular membrane-bounded organelle"/>
    <property type="evidence" value="ECO:0000314"/>
    <property type="project" value="MGI"/>
</dbReference>
<dbReference type="GO" id="GO:0005886">
    <property type="term" value="C:plasma membrane"/>
    <property type="evidence" value="ECO:0000314"/>
    <property type="project" value="BHF-UCL"/>
</dbReference>
<dbReference type="GO" id="GO:0038023">
    <property type="term" value="F:signaling receptor activity"/>
    <property type="evidence" value="ECO:0007669"/>
    <property type="project" value="Ensembl"/>
</dbReference>
<dbReference type="GO" id="GO:0031625">
    <property type="term" value="F:ubiquitin protein ligase binding"/>
    <property type="evidence" value="ECO:0007669"/>
    <property type="project" value="Ensembl"/>
</dbReference>
<dbReference type="GO" id="GO:0042113">
    <property type="term" value="P:B cell activation"/>
    <property type="evidence" value="ECO:0000314"/>
    <property type="project" value="MGI"/>
</dbReference>
<dbReference type="GO" id="GO:0019724">
    <property type="term" value="P:B cell mediated immunity"/>
    <property type="evidence" value="ECO:0000316"/>
    <property type="project" value="MGI"/>
</dbReference>
<dbReference type="GO" id="GO:0042100">
    <property type="term" value="P:B cell proliferation"/>
    <property type="evidence" value="ECO:0000314"/>
    <property type="project" value="MGI"/>
</dbReference>
<dbReference type="GO" id="GO:0023035">
    <property type="term" value="P:CD40 signaling pathway"/>
    <property type="evidence" value="ECO:0000316"/>
    <property type="project" value="MGI"/>
</dbReference>
<dbReference type="GO" id="GO:0007259">
    <property type="term" value="P:cell surface receptor signaling pathway via JAK-STAT"/>
    <property type="evidence" value="ECO:0007669"/>
    <property type="project" value="Ensembl"/>
</dbReference>
<dbReference type="GO" id="GO:0071260">
    <property type="term" value="P:cellular response to mechanical stimulus"/>
    <property type="evidence" value="ECO:0007669"/>
    <property type="project" value="Ensembl"/>
</dbReference>
<dbReference type="GO" id="GO:0042832">
    <property type="term" value="P:defense response to protozoan"/>
    <property type="evidence" value="ECO:0000314"/>
    <property type="project" value="MGI"/>
</dbReference>
<dbReference type="GO" id="GO:0051607">
    <property type="term" value="P:defense response to virus"/>
    <property type="evidence" value="ECO:0000314"/>
    <property type="project" value="MGI"/>
</dbReference>
<dbReference type="GO" id="GO:0002768">
    <property type="term" value="P:immune response-regulating cell surface receptor signaling pathway"/>
    <property type="evidence" value="ECO:0000314"/>
    <property type="project" value="MGI"/>
</dbReference>
<dbReference type="GO" id="GO:0006874">
    <property type="term" value="P:intracellular calcium ion homeostasis"/>
    <property type="evidence" value="ECO:0000315"/>
    <property type="project" value="BHF-UCL"/>
</dbReference>
<dbReference type="GO" id="GO:0043491">
    <property type="term" value="P:phosphatidylinositol 3-kinase/protein kinase B signal transduction"/>
    <property type="evidence" value="ECO:0000314"/>
    <property type="project" value="MGI"/>
</dbReference>
<dbReference type="GO" id="GO:0045766">
    <property type="term" value="P:positive regulation of angiogenesis"/>
    <property type="evidence" value="ECO:0007669"/>
    <property type="project" value="Ensembl"/>
</dbReference>
<dbReference type="GO" id="GO:0030890">
    <property type="term" value="P:positive regulation of B cell proliferation"/>
    <property type="evidence" value="ECO:0000314"/>
    <property type="project" value="MGI"/>
</dbReference>
<dbReference type="GO" id="GO:0043536">
    <property type="term" value="P:positive regulation of blood vessel endothelial cell migration"/>
    <property type="evidence" value="ECO:0007669"/>
    <property type="project" value="Ensembl"/>
</dbReference>
<dbReference type="GO" id="GO:0043123">
    <property type="term" value="P:positive regulation of canonical NF-kappaB signal transduction"/>
    <property type="evidence" value="ECO:0007669"/>
    <property type="project" value="Ensembl"/>
</dbReference>
<dbReference type="GO" id="GO:2000353">
    <property type="term" value="P:positive regulation of endothelial cell apoptotic process"/>
    <property type="evidence" value="ECO:0007669"/>
    <property type="project" value="Ensembl"/>
</dbReference>
<dbReference type="GO" id="GO:0032735">
    <property type="term" value="P:positive regulation of interleukin-12 production"/>
    <property type="evidence" value="ECO:0000314"/>
    <property type="project" value="MGI"/>
</dbReference>
<dbReference type="GO" id="GO:1902216">
    <property type="term" value="P:positive regulation of interleukin-4-mediated signaling pathway"/>
    <property type="evidence" value="ECO:0007669"/>
    <property type="project" value="Ensembl"/>
</dbReference>
<dbReference type="GO" id="GO:0048304">
    <property type="term" value="P:positive regulation of isotype switching to IgG isotypes"/>
    <property type="evidence" value="ECO:0000314"/>
    <property type="project" value="MGI"/>
</dbReference>
<dbReference type="GO" id="GO:0043410">
    <property type="term" value="P:positive regulation of MAPK cascade"/>
    <property type="evidence" value="ECO:0007669"/>
    <property type="project" value="Ensembl"/>
</dbReference>
<dbReference type="GO" id="GO:0090037">
    <property type="term" value="P:positive regulation of protein kinase C signaling"/>
    <property type="evidence" value="ECO:0007669"/>
    <property type="project" value="Ensembl"/>
</dbReference>
<dbReference type="GO" id="GO:0045944">
    <property type="term" value="P:positive regulation of transcription by RNA polymerase II"/>
    <property type="evidence" value="ECO:0007669"/>
    <property type="project" value="Ensembl"/>
</dbReference>
<dbReference type="GO" id="GO:0050776">
    <property type="term" value="P:regulation of immune response"/>
    <property type="evidence" value="ECO:0000314"/>
    <property type="project" value="MGI"/>
</dbReference>
<dbReference type="GO" id="GO:0002637">
    <property type="term" value="P:regulation of immunoglobulin production"/>
    <property type="evidence" value="ECO:0000314"/>
    <property type="project" value="MGI"/>
</dbReference>
<dbReference type="CDD" id="cd13407">
    <property type="entry name" value="TNFRSF5"/>
    <property type="match status" value="1"/>
</dbReference>
<dbReference type="FunFam" id="2.10.50.10:FF:000041">
    <property type="entry name" value="Tumor necrosis factor receptor superfamily member 5"/>
    <property type="match status" value="1"/>
</dbReference>
<dbReference type="Gene3D" id="2.10.50.10">
    <property type="entry name" value="Tumor Necrosis Factor Receptor, subunit A, domain 2"/>
    <property type="match status" value="3"/>
</dbReference>
<dbReference type="InterPro" id="IPR001368">
    <property type="entry name" value="TNFR/NGFR_Cys_rich_reg"/>
</dbReference>
<dbReference type="InterPro" id="IPR020435">
    <property type="entry name" value="TNFR_5"/>
</dbReference>
<dbReference type="InterPro" id="IPR052135">
    <property type="entry name" value="TNFRSF5"/>
</dbReference>
<dbReference type="InterPro" id="IPR034021">
    <property type="entry name" value="TNFRSF5_N"/>
</dbReference>
<dbReference type="PANTHER" id="PTHR46875">
    <property type="entry name" value="TUMOR NECROSIS FACTOR RECEPTOR SUPERFAMILY MEMBER 5"/>
    <property type="match status" value="1"/>
</dbReference>
<dbReference type="PANTHER" id="PTHR46875:SF1">
    <property type="entry name" value="TUMOR NECROSIS FACTOR RECEPTOR SUPERFAMILY MEMBER 5"/>
    <property type="match status" value="1"/>
</dbReference>
<dbReference type="Pfam" id="PF00020">
    <property type="entry name" value="TNFR_c6"/>
    <property type="match status" value="2"/>
</dbReference>
<dbReference type="PRINTS" id="PR01922">
    <property type="entry name" value="TNFACTORR5"/>
</dbReference>
<dbReference type="SMART" id="SM00208">
    <property type="entry name" value="TNFR"/>
    <property type="match status" value="4"/>
</dbReference>
<dbReference type="SUPFAM" id="SSF57586">
    <property type="entry name" value="TNF receptor-like"/>
    <property type="match status" value="3"/>
</dbReference>
<dbReference type="PROSITE" id="PS00652">
    <property type="entry name" value="TNFR_NGFR_1"/>
    <property type="match status" value="1"/>
</dbReference>
<dbReference type="PROSITE" id="PS50050">
    <property type="entry name" value="TNFR_NGFR_2"/>
    <property type="match status" value="4"/>
</dbReference>
<accession>P27512</accession>
<accession>Q3TS33</accession>
<accession>Q3TSL2</accession>
<accession>Q3U799</accession>
<accession>Q3U7C9</accession>
<accession>Q3UBH3</accession>
<accession>Q542B1</accession>
<accession>Q8K2X6</accession>
<accession>Q99NE0</accession>
<accession>Q99NE1</accession>
<accession>Q99NE2</accession>
<accession>Q99NE3</accession>
<sequence>MVSLPRLCALWGCLLTAVHLGQCVTCSDKQYLHDGQCCDLCQPGSRLTSHCTALEKTQCHPCDSGEFSAQWNREIRCHQHRHCEPNQGLRVKKEGTAESDTVCTCKEGQHCTSKDCEACAQHTPCIPGFGVMEMATETTDTVCHPCPVGFFSNQSSLFEKCYPWTSCEDKNLEVLQKGTSQTNVICGLKSRMRALLVIPVVMGILITIFGVFLYIKKVVKKPKDNEILPPAARRQDPQEMEDYPGHNTAAPVQETLHGCQPVTQEDGKESRISVQERQVTDSIALRPLV</sequence>
<protein>
    <recommendedName>
        <fullName>Tumor necrosis factor receptor superfamily member 5</fullName>
    </recommendedName>
    <alternativeName>
        <fullName>B-cell surface antigen CD40</fullName>
    </alternativeName>
    <alternativeName>
        <fullName>Bp50</fullName>
    </alternativeName>
    <alternativeName>
        <fullName>CD40L receptor</fullName>
    </alternativeName>
    <cdAntigenName>CD40</cdAntigenName>
</protein>
<comment type="function">
    <text evidence="2 6">Receptor for TNFSF5/CD40LG (By similarity). Transduces TRAF6- and MAP3K8-mediated signals that activate ERK in macrophages and B cells, leading to induction of immunoglobulin secretion (PubMed:12881420).</text>
</comment>
<comment type="subunit">
    <text evidence="1 6 7 8">Monomer and homodimer. Interacts with TRAF1, TRAF2 and TRAF6 (By similarity). Interacts with TRAF3 and TRAF5. Interacts with TRAF6 and MAP3K8; the interaction is required for ERK activation.</text>
</comment>
<comment type="interaction">
    <interactant intactId="EBI-525742">
        <id>P27512</id>
    </interactant>
    <interactant intactId="EBI-625119">
        <id>P35991</id>
        <label>Btk</label>
    </interactant>
    <organismsDiffer>false</organismsDiffer>
    <experiments>3</experiments>
</comment>
<comment type="interaction">
    <interactant intactId="EBI-525742">
        <id>P27512</id>
    </interactant>
    <interactant intactId="EBI-520016">
        <id>P39429</id>
        <label>Traf2</label>
    </interactant>
    <organismsDiffer>false</organismsDiffer>
    <experiments>3</experiments>
</comment>
<comment type="interaction">
    <interactant intactId="EBI-525742">
        <id>P27512</id>
    </interactant>
    <interactant intactId="EBI-448028">
        <id>P70196</id>
        <label>Traf6</label>
    </interactant>
    <organismsDiffer>false</organismsDiffer>
    <experiments>2</experiments>
</comment>
<comment type="subcellular location">
    <molecule>Isoform I</molecule>
    <subcellularLocation>
        <location>Cell membrane</location>
        <topology>Single-pass type I membrane protein</topology>
    </subcellularLocation>
</comment>
<comment type="subcellular location">
    <molecule>Isoform III</molecule>
    <subcellularLocation>
        <location>Cell membrane</location>
        <topology>Single-pass type I membrane protein</topology>
    </subcellularLocation>
</comment>
<comment type="subcellular location">
    <molecule>Isoform IV</molecule>
    <subcellularLocation>
        <location>Cell membrane</location>
        <topology>Single-pass type I membrane protein</topology>
    </subcellularLocation>
</comment>
<comment type="subcellular location">
    <molecule>Isoform V</molecule>
    <subcellularLocation>
        <location>Cell membrane</location>
        <topology>Single-pass type I membrane protein</topology>
    </subcellularLocation>
</comment>
<comment type="subcellular location">
    <molecule>Isoform II</molecule>
    <subcellularLocation>
        <location>Secreted</location>
    </subcellularLocation>
</comment>
<comment type="alternative products">
    <event type="alternative splicing"/>
    <isoform>
        <id>P27512-1</id>
        <name>I</name>
        <sequence type="displayed"/>
    </isoform>
    <isoform>
        <id>P27512-2</id>
        <name>II</name>
        <sequence type="described" ref="VSP_006474 VSP_006475"/>
    </isoform>
    <isoform>
        <id>P27512-3</id>
        <name>III</name>
        <sequence type="described" ref="VSP_006477 VSP_006478"/>
    </isoform>
    <isoform>
        <id>P27512-4</id>
        <name>IV</name>
        <sequence type="described" ref="VSP_006479 VSP_006480"/>
    </isoform>
    <isoform>
        <id>P27512-5</id>
        <name>V</name>
        <sequence type="described" ref="VSP_006476"/>
    </isoform>
</comment>
<name>TNR5_MOUSE</name>